<keyword id="KW-0325">Glycoprotein</keyword>
<keyword id="KW-1185">Reference proteome</keyword>
<keyword id="KW-0964">Secreted</keyword>
<keyword id="KW-0732">Signal</keyword>
<dbReference type="EMBL" id="AK006964">
    <property type="protein sequence ID" value="BAB24810.1"/>
    <property type="molecule type" value="mRNA"/>
</dbReference>
<dbReference type="EMBL" id="AC125151">
    <property type="status" value="NOT_ANNOTATED_CDS"/>
    <property type="molecule type" value="Genomic_DNA"/>
</dbReference>
<dbReference type="EMBL" id="AC123867">
    <property type="status" value="NOT_ANNOTATED_CDS"/>
    <property type="molecule type" value="Genomic_DNA"/>
</dbReference>
<dbReference type="CCDS" id="CCDS27245.1"/>
<dbReference type="RefSeq" id="NP_082836.2">
    <property type="nucleotide sequence ID" value="NM_028560.4"/>
</dbReference>
<dbReference type="SMR" id="Q9D9G2"/>
<dbReference type="FunCoup" id="Q9D9G2">
    <property type="interactions" value="3"/>
</dbReference>
<dbReference type="STRING" id="10090.ENSMUSP00000022678"/>
<dbReference type="GlyCosmos" id="Q9D9G2">
    <property type="glycosylation" value="2 sites, No reported glycans"/>
</dbReference>
<dbReference type="GlyGen" id="Q9D9G2">
    <property type="glycosylation" value="3 sites"/>
</dbReference>
<dbReference type="iPTMnet" id="Q9D9G2"/>
<dbReference type="SwissPalm" id="Q9D9G2"/>
<dbReference type="PaxDb" id="10090-ENSMUSP00000022678"/>
<dbReference type="ProteomicsDB" id="287912"/>
<dbReference type="ProteomicsDB" id="339395"/>
<dbReference type="Antibodypedia" id="5316">
    <property type="antibodies" value="124 antibodies from 23 providers"/>
</dbReference>
<dbReference type="DNASU" id="73523"/>
<dbReference type="Ensembl" id="ENSMUST00000022678.5">
    <property type="protein sequence ID" value="ENSMUSP00000022678.4"/>
    <property type="gene ID" value="ENSMUSG00000022085.5"/>
</dbReference>
<dbReference type="GeneID" id="73523"/>
<dbReference type="KEGG" id="mmu:73523"/>
<dbReference type="AGR" id="MGI:1920773"/>
<dbReference type="CTD" id="157310"/>
<dbReference type="MGI" id="MGI:1920773">
    <property type="gene designation" value="Pebp4"/>
</dbReference>
<dbReference type="VEuPathDB" id="HostDB:ENSMUSG00000022085"/>
<dbReference type="eggNOG" id="KOG3346">
    <property type="taxonomic scope" value="Eukaryota"/>
</dbReference>
<dbReference type="GeneTree" id="ENSGT00940000162387"/>
<dbReference type="HOGENOM" id="CLU_089676_0_0_1"/>
<dbReference type="InParanoid" id="Q9D9G2"/>
<dbReference type="OMA" id="QKITSWM"/>
<dbReference type="OrthoDB" id="2506647at2759"/>
<dbReference type="PhylomeDB" id="Q9D9G2"/>
<dbReference type="TreeFam" id="TF315074"/>
<dbReference type="BioGRID-ORCS" id="73523">
    <property type="hits" value="1 hit in 78 CRISPR screens"/>
</dbReference>
<dbReference type="ChiTaRS" id="Pebp4">
    <property type="organism name" value="mouse"/>
</dbReference>
<dbReference type="PRO" id="PR:Q9D9G2"/>
<dbReference type="Proteomes" id="UP000000589">
    <property type="component" value="Chromosome 14"/>
</dbReference>
<dbReference type="RNAct" id="Q9D9G2">
    <property type="molecule type" value="protein"/>
</dbReference>
<dbReference type="Bgee" id="ENSMUSG00000022085">
    <property type="expression patterns" value="Expressed in spermatocyte and 43 other cell types or tissues"/>
</dbReference>
<dbReference type="GO" id="GO:0005576">
    <property type="term" value="C:extracellular region"/>
    <property type="evidence" value="ECO:0007669"/>
    <property type="project" value="UniProtKB-SubCell"/>
</dbReference>
<dbReference type="CDD" id="cd00866">
    <property type="entry name" value="PEBP_euk"/>
    <property type="match status" value="1"/>
</dbReference>
<dbReference type="Gene3D" id="3.90.280.10">
    <property type="entry name" value="PEBP-like"/>
    <property type="match status" value="1"/>
</dbReference>
<dbReference type="InterPro" id="IPR008914">
    <property type="entry name" value="PEBP"/>
</dbReference>
<dbReference type="InterPro" id="IPR036610">
    <property type="entry name" value="PEBP-like_sf"/>
</dbReference>
<dbReference type="InterPro" id="IPR035810">
    <property type="entry name" value="PEBP_euk"/>
</dbReference>
<dbReference type="InterPro" id="IPR001858">
    <property type="entry name" value="Phosphatidylethanolamine-bd_CS"/>
</dbReference>
<dbReference type="PANTHER" id="PTHR11362">
    <property type="entry name" value="PHOSPHATIDYLETHANOLAMINE-BINDING PROTEIN"/>
    <property type="match status" value="1"/>
</dbReference>
<dbReference type="PANTHER" id="PTHR11362:SF82">
    <property type="entry name" value="PHOSPHATIDYLETHANOLAMINE-BINDING PROTEIN 4"/>
    <property type="match status" value="1"/>
</dbReference>
<dbReference type="Pfam" id="PF01161">
    <property type="entry name" value="PBP"/>
    <property type="match status" value="1"/>
</dbReference>
<dbReference type="SUPFAM" id="SSF49777">
    <property type="entry name" value="PEBP-like"/>
    <property type="match status" value="1"/>
</dbReference>
<dbReference type="PROSITE" id="PS01220">
    <property type="entry name" value="PBP"/>
    <property type="match status" value="1"/>
</dbReference>
<accession>Q9D9G2</accession>
<accession>G3X8V3</accession>
<reference key="1">
    <citation type="journal article" date="2005" name="Science">
        <title>The transcriptional landscape of the mammalian genome.</title>
        <authorList>
            <person name="Carninci P."/>
            <person name="Kasukawa T."/>
            <person name="Katayama S."/>
            <person name="Gough J."/>
            <person name="Frith M.C."/>
            <person name="Maeda N."/>
            <person name="Oyama R."/>
            <person name="Ravasi T."/>
            <person name="Lenhard B."/>
            <person name="Wells C."/>
            <person name="Kodzius R."/>
            <person name="Shimokawa K."/>
            <person name="Bajic V.B."/>
            <person name="Brenner S.E."/>
            <person name="Batalov S."/>
            <person name="Forrest A.R."/>
            <person name="Zavolan M."/>
            <person name="Davis M.J."/>
            <person name="Wilming L.G."/>
            <person name="Aidinis V."/>
            <person name="Allen J.E."/>
            <person name="Ambesi-Impiombato A."/>
            <person name="Apweiler R."/>
            <person name="Aturaliya R.N."/>
            <person name="Bailey T.L."/>
            <person name="Bansal M."/>
            <person name="Baxter L."/>
            <person name="Beisel K.W."/>
            <person name="Bersano T."/>
            <person name="Bono H."/>
            <person name="Chalk A.M."/>
            <person name="Chiu K.P."/>
            <person name="Choudhary V."/>
            <person name="Christoffels A."/>
            <person name="Clutterbuck D.R."/>
            <person name="Crowe M.L."/>
            <person name="Dalla E."/>
            <person name="Dalrymple B.P."/>
            <person name="de Bono B."/>
            <person name="Della Gatta G."/>
            <person name="di Bernardo D."/>
            <person name="Down T."/>
            <person name="Engstrom P."/>
            <person name="Fagiolini M."/>
            <person name="Faulkner G."/>
            <person name="Fletcher C.F."/>
            <person name="Fukushima T."/>
            <person name="Furuno M."/>
            <person name="Futaki S."/>
            <person name="Gariboldi M."/>
            <person name="Georgii-Hemming P."/>
            <person name="Gingeras T.R."/>
            <person name="Gojobori T."/>
            <person name="Green R.E."/>
            <person name="Gustincich S."/>
            <person name="Harbers M."/>
            <person name="Hayashi Y."/>
            <person name="Hensch T.K."/>
            <person name="Hirokawa N."/>
            <person name="Hill D."/>
            <person name="Huminiecki L."/>
            <person name="Iacono M."/>
            <person name="Ikeo K."/>
            <person name="Iwama A."/>
            <person name="Ishikawa T."/>
            <person name="Jakt M."/>
            <person name="Kanapin A."/>
            <person name="Katoh M."/>
            <person name="Kawasawa Y."/>
            <person name="Kelso J."/>
            <person name="Kitamura H."/>
            <person name="Kitano H."/>
            <person name="Kollias G."/>
            <person name="Krishnan S.P."/>
            <person name="Kruger A."/>
            <person name="Kummerfeld S.K."/>
            <person name="Kurochkin I.V."/>
            <person name="Lareau L.F."/>
            <person name="Lazarevic D."/>
            <person name="Lipovich L."/>
            <person name="Liu J."/>
            <person name="Liuni S."/>
            <person name="McWilliam S."/>
            <person name="Madan Babu M."/>
            <person name="Madera M."/>
            <person name="Marchionni L."/>
            <person name="Matsuda H."/>
            <person name="Matsuzawa S."/>
            <person name="Miki H."/>
            <person name="Mignone F."/>
            <person name="Miyake S."/>
            <person name="Morris K."/>
            <person name="Mottagui-Tabar S."/>
            <person name="Mulder N."/>
            <person name="Nakano N."/>
            <person name="Nakauchi H."/>
            <person name="Ng P."/>
            <person name="Nilsson R."/>
            <person name="Nishiguchi S."/>
            <person name="Nishikawa S."/>
            <person name="Nori F."/>
            <person name="Ohara O."/>
            <person name="Okazaki Y."/>
            <person name="Orlando V."/>
            <person name="Pang K.C."/>
            <person name="Pavan W.J."/>
            <person name="Pavesi G."/>
            <person name="Pesole G."/>
            <person name="Petrovsky N."/>
            <person name="Piazza S."/>
            <person name="Reed J."/>
            <person name="Reid J.F."/>
            <person name="Ring B.Z."/>
            <person name="Ringwald M."/>
            <person name="Rost B."/>
            <person name="Ruan Y."/>
            <person name="Salzberg S.L."/>
            <person name="Sandelin A."/>
            <person name="Schneider C."/>
            <person name="Schoenbach C."/>
            <person name="Sekiguchi K."/>
            <person name="Semple C.A."/>
            <person name="Seno S."/>
            <person name="Sessa L."/>
            <person name="Sheng Y."/>
            <person name="Shibata Y."/>
            <person name="Shimada H."/>
            <person name="Shimada K."/>
            <person name="Silva D."/>
            <person name="Sinclair B."/>
            <person name="Sperling S."/>
            <person name="Stupka E."/>
            <person name="Sugiura K."/>
            <person name="Sultana R."/>
            <person name="Takenaka Y."/>
            <person name="Taki K."/>
            <person name="Tammoja K."/>
            <person name="Tan S.L."/>
            <person name="Tang S."/>
            <person name="Taylor M.S."/>
            <person name="Tegner J."/>
            <person name="Teichmann S.A."/>
            <person name="Ueda H.R."/>
            <person name="van Nimwegen E."/>
            <person name="Verardo R."/>
            <person name="Wei C.L."/>
            <person name="Yagi K."/>
            <person name="Yamanishi H."/>
            <person name="Zabarovsky E."/>
            <person name="Zhu S."/>
            <person name="Zimmer A."/>
            <person name="Hide W."/>
            <person name="Bult C."/>
            <person name="Grimmond S.M."/>
            <person name="Teasdale R.D."/>
            <person name="Liu E.T."/>
            <person name="Brusic V."/>
            <person name="Quackenbush J."/>
            <person name="Wahlestedt C."/>
            <person name="Mattick J.S."/>
            <person name="Hume D.A."/>
            <person name="Kai C."/>
            <person name="Sasaki D."/>
            <person name="Tomaru Y."/>
            <person name="Fukuda S."/>
            <person name="Kanamori-Katayama M."/>
            <person name="Suzuki M."/>
            <person name="Aoki J."/>
            <person name="Arakawa T."/>
            <person name="Iida J."/>
            <person name="Imamura K."/>
            <person name="Itoh M."/>
            <person name="Kato T."/>
            <person name="Kawaji H."/>
            <person name="Kawagashira N."/>
            <person name="Kawashima T."/>
            <person name="Kojima M."/>
            <person name="Kondo S."/>
            <person name="Konno H."/>
            <person name="Nakano K."/>
            <person name="Ninomiya N."/>
            <person name="Nishio T."/>
            <person name="Okada M."/>
            <person name="Plessy C."/>
            <person name="Shibata K."/>
            <person name="Shiraki T."/>
            <person name="Suzuki S."/>
            <person name="Tagami M."/>
            <person name="Waki K."/>
            <person name="Watahiki A."/>
            <person name="Okamura-Oho Y."/>
            <person name="Suzuki H."/>
            <person name="Kawai J."/>
            <person name="Hayashizaki Y."/>
        </authorList>
    </citation>
    <scope>NUCLEOTIDE SEQUENCE [LARGE SCALE MRNA]</scope>
    <source>
        <strain>C57BL/6J</strain>
        <tissue>Testis</tissue>
    </source>
</reference>
<reference key="2">
    <citation type="journal article" date="2009" name="PLoS Biol.">
        <title>Lineage-specific biology revealed by a finished genome assembly of the mouse.</title>
        <authorList>
            <person name="Church D.M."/>
            <person name="Goodstadt L."/>
            <person name="Hillier L.W."/>
            <person name="Zody M.C."/>
            <person name="Goldstein S."/>
            <person name="She X."/>
            <person name="Bult C.J."/>
            <person name="Agarwala R."/>
            <person name="Cherry J.L."/>
            <person name="DiCuccio M."/>
            <person name="Hlavina W."/>
            <person name="Kapustin Y."/>
            <person name="Meric P."/>
            <person name="Maglott D."/>
            <person name="Birtle Z."/>
            <person name="Marques A.C."/>
            <person name="Graves T."/>
            <person name="Zhou S."/>
            <person name="Teague B."/>
            <person name="Potamousis K."/>
            <person name="Churas C."/>
            <person name="Place M."/>
            <person name="Herschleb J."/>
            <person name="Runnheim R."/>
            <person name="Forrest D."/>
            <person name="Amos-Landgraf J."/>
            <person name="Schwartz D.C."/>
            <person name="Cheng Z."/>
            <person name="Lindblad-Toh K."/>
            <person name="Eichler E.E."/>
            <person name="Ponting C.P."/>
        </authorList>
    </citation>
    <scope>NUCLEOTIDE SEQUENCE [LARGE SCALE GENOMIC DNA]</scope>
    <source>
        <strain>C57BL/6J</strain>
    </source>
</reference>
<reference key="3">
    <citation type="journal article" date="2010" name="Cell">
        <title>A tissue-specific atlas of mouse protein phosphorylation and expression.</title>
        <authorList>
            <person name="Huttlin E.L."/>
            <person name="Jedrychowski M.P."/>
            <person name="Elias J.E."/>
            <person name="Goswami T."/>
            <person name="Rad R."/>
            <person name="Beausoleil S.A."/>
            <person name="Villen J."/>
            <person name="Haas W."/>
            <person name="Sowa M.E."/>
            <person name="Gygi S.P."/>
        </authorList>
    </citation>
    <scope>IDENTIFICATION BY MASS SPECTROMETRY [LARGE SCALE ANALYSIS]</scope>
    <source>
        <tissue>Testis</tissue>
    </source>
</reference>
<reference key="4">
    <citation type="journal article" date="2016" name="Biochim. Biophys. Acta">
        <title>Phosphatidylethanolamine binding protein 4 (PEBP4) is a secreted protein and has multiple functions.</title>
        <authorList>
            <person name="He H."/>
            <person name="Liu D."/>
            <person name="Lin H."/>
            <person name="Jiang S."/>
            <person name="Ying Y."/>
            <person name="Chun S."/>
            <person name="Deng H."/>
            <person name="Zaia J."/>
            <person name="Wen R."/>
            <person name="Luo Z."/>
        </authorList>
    </citation>
    <scope>GLYCOSYLATION AT ASN-77 AND ASN-139</scope>
</reference>
<protein>
    <recommendedName>
        <fullName>Phosphatidylethanolamine-binding protein 4</fullName>
        <shortName>PEBP-4</shortName>
    </recommendedName>
</protein>
<name>PEBP4_MOUSE</name>
<evidence type="ECO:0000250" key="1">
    <source>
        <dbReference type="UniProtKB" id="Q96S96"/>
    </source>
</evidence>
<evidence type="ECO:0000255" key="2"/>
<evidence type="ECO:0000256" key="3">
    <source>
        <dbReference type="SAM" id="MobiDB-lite"/>
    </source>
</evidence>
<evidence type="ECO:0000269" key="4">
    <source>
    </source>
</evidence>
<evidence type="ECO:0000305" key="5"/>
<organism>
    <name type="scientific">Mus musculus</name>
    <name type="common">Mouse</name>
    <dbReference type="NCBI Taxonomy" id="10090"/>
    <lineage>
        <taxon>Eukaryota</taxon>
        <taxon>Metazoa</taxon>
        <taxon>Chordata</taxon>
        <taxon>Craniata</taxon>
        <taxon>Vertebrata</taxon>
        <taxon>Euteleostomi</taxon>
        <taxon>Mammalia</taxon>
        <taxon>Eutheria</taxon>
        <taxon>Euarchontoglires</taxon>
        <taxon>Glires</taxon>
        <taxon>Rodentia</taxon>
        <taxon>Myomorpha</taxon>
        <taxon>Muroidea</taxon>
        <taxon>Muridae</taxon>
        <taxon>Murinae</taxon>
        <taxon>Mus</taxon>
        <taxon>Mus</taxon>
    </lineage>
</organism>
<feature type="signal peptide" evidence="2">
    <location>
        <begin position="1"/>
        <end position="26"/>
    </location>
</feature>
<feature type="chain" id="PRO_0000023280" description="Phosphatidylethanolamine-binding protein 4">
    <location>
        <begin position="27"/>
        <end position="242"/>
    </location>
</feature>
<feature type="region of interest" description="Disordered" evidence="3">
    <location>
        <begin position="31"/>
        <end position="50"/>
    </location>
</feature>
<feature type="region of interest" description="Important for secretion" evidence="1">
    <location>
        <begin position="210"/>
        <end position="242"/>
    </location>
</feature>
<feature type="compositionally biased region" description="Gly residues" evidence="3">
    <location>
        <begin position="38"/>
        <end position="50"/>
    </location>
</feature>
<feature type="glycosylation site" description="N-linked (GlcNAc...) asparagine" evidence="4">
    <location>
        <position position="77"/>
    </location>
</feature>
<feature type="glycosylation site" description="N-linked (GlcNAc...) asparagine" evidence="4">
    <location>
        <position position="139"/>
    </location>
</feature>
<feature type="sequence conflict" description="In Ref. 1; BAB24810." ref="1">
    <original>S</original>
    <variation>R</variation>
    <location>
        <position position="13"/>
    </location>
</feature>
<feature type="sequence conflict" description="In Ref. 1; BAB24810." ref="1">
    <original>T</original>
    <variation>P</variation>
    <location>
        <position position="94"/>
    </location>
</feature>
<feature type="sequence conflict" description="In Ref. 1; BAB24810." ref="1">
    <original>L</original>
    <variation>V</variation>
    <location>
        <position position="169"/>
    </location>
</feature>
<feature type="sequence conflict" description="In Ref. 1; BAB24810." ref="1">
    <original>D</original>
    <variation>N</variation>
    <location>
        <position position="193"/>
    </location>
</feature>
<gene>
    <name type="primary">Pebp4</name>
</gene>
<sequence length="242" mass="26858">MTMKLVAAALCLSLLAAGLWVGLSLTAESIEEGKPGGEKPGGGKPGGSGRGCFLPPLPKEDVSLCRNLEVFYMEMGNISCKIVPKCNLYRQKITAWQAPIVKFHTALDGALYLLVMVDPDAPSRSNPVMKYWRHWLVSNITGADMKSGSIRGNVLSDYSPPTPPPETGLHRYQFFVYLQGDRDISLSVEEKADLGGWNLDKFLQQYGLRDPDTSTQFMTQFDEELSSEFGRINDDQEQFNQK</sequence>
<proteinExistence type="evidence at protein level"/>
<comment type="function">
    <text evidence="1">Promotes AKT phosphorylation, suggesting a possible role in the PI3K-AKT signaling pathway.</text>
</comment>
<comment type="subcellular location">
    <subcellularLocation>
        <location evidence="1">Secreted</location>
    </subcellularLocation>
</comment>
<comment type="similarity">
    <text evidence="5">Belongs to the phosphatidylethanolamine-binding protein family.</text>
</comment>